<protein>
    <recommendedName>
        <fullName evidence="1">Probable alpha-L-glutamate ligase</fullName>
        <ecNumber evidence="1">6.3.2.-</ecNumber>
    </recommendedName>
</protein>
<reference key="1">
    <citation type="submission" date="2007-09" db="EMBL/GenBank/DDBJ databases">
        <title>Complete sequence of chromosome of Serratia proteamaculans 568.</title>
        <authorList>
            <consortium name="US DOE Joint Genome Institute"/>
            <person name="Copeland A."/>
            <person name="Lucas S."/>
            <person name="Lapidus A."/>
            <person name="Barry K."/>
            <person name="Glavina del Rio T."/>
            <person name="Dalin E."/>
            <person name="Tice H."/>
            <person name="Pitluck S."/>
            <person name="Chain P."/>
            <person name="Malfatti S."/>
            <person name="Shin M."/>
            <person name="Vergez L."/>
            <person name="Schmutz J."/>
            <person name="Larimer F."/>
            <person name="Land M."/>
            <person name="Hauser L."/>
            <person name="Kyrpides N."/>
            <person name="Kim E."/>
            <person name="Taghavi S."/>
            <person name="Newman L."/>
            <person name="Vangronsveld J."/>
            <person name="van der Lelie D."/>
            <person name="Richardson P."/>
        </authorList>
    </citation>
    <scope>NUCLEOTIDE SEQUENCE [LARGE SCALE GENOMIC DNA]</scope>
    <source>
        <strain>568</strain>
    </source>
</reference>
<keyword id="KW-0067">ATP-binding</keyword>
<keyword id="KW-0436">Ligase</keyword>
<keyword id="KW-0460">Magnesium</keyword>
<keyword id="KW-0464">Manganese</keyword>
<keyword id="KW-0479">Metal-binding</keyword>
<keyword id="KW-0547">Nucleotide-binding</keyword>
<keyword id="KW-0648">Protein biosynthesis</keyword>
<evidence type="ECO:0000255" key="1">
    <source>
        <dbReference type="HAMAP-Rule" id="MF_01552"/>
    </source>
</evidence>
<accession>A8GCA7</accession>
<gene>
    <name evidence="1" type="primary">rimK</name>
    <name type="ordered locus">Spro_1643</name>
</gene>
<feature type="chain" id="PRO_1000068855" description="Probable alpha-L-glutamate ligase">
    <location>
        <begin position="1"/>
        <end position="300"/>
    </location>
</feature>
<feature type="domain" description="ATP-grasp" evidence="1">
    <location>
        <begin position="104"/>
        <end position="287"/>
    </location>
</feature>
<feature type="binding site" evidence="1">
    <location>
        <position position="141"/>
    </location>
    <ligand>
        <name>ATP</name>
        <dbReference type="ChEBI" id="CHEBI:30616"/>
    </ligand>
</feature>
<feature type="binding site" evidence="1">
    <location>
        <begin position="178"/>
        <end position="179"/>
    </location>
    <ligand>
        <name>ATP</name>
        <dbReference type="ChEBI" id="CHEBI:30616"/>
    </ligand>
</feature>
<feature type="binding site" evidence="1">
    <location>
        <position position="187"/>
    </location>
    <ligand>
        <name>ATP</name>
        <dbReference type="ChEBI" id="CHEBI:30616"/>
    </ligand>
</feature>
<feature type="binding site" evidence="1">
    <location>
        <begin position="211"/>
        <end position="213"/>
    </location>
    <ligand>
        <name>ATP</name>
        <dbReference type="ChEBI" id="CHEBI:30616"/>
    </ligand>
</feature>
<feature type="binding site" evidence="1">
    <location>
        <position position="248"/>
    </location>
    <ligand>
        <name>Mg(2+)</name>
        <dbReference type="ChEBI" id="CHEBI:18420"/>
        <label>1</label>
    </ligand>
</feature>
<feature type="binding site" evidence="1">
    <location>
        <position position="248"/>
    </location>
    <ligand>
        <name>Mn(2+)</name>
        <dbReference type="ChEBI" id="CHEBI:29035"/>
        <label>1</label>
    </ligand>
</feature>
<feature type="binding site" evidence="1">
    <location>
        <position position="260"/>
    </location>
    <ligand>
        <name>Mg(2+)</name>
        <dbReference type="ChEBI" id="CHEBI:18420"/>
        <label>1</label>
    </ligand>
</feature>
<feature type="binding site" evidence="1">
    <location>
        <position position="260"/>
    </location>
    <ligand>
        <name>Mg(2+)</name>
        <dbReference type="ChEBI" id="CHEBI:18420"/>
        <label>2</label>
    </ligand>
</feature>
<feature type="binding site" evidence="1">
    <location>
        <position position="260"/>
    </location>
    <ligand>
        <name>Mn(2+)</name>
        <dbReference type="ChEBI" id="CHEBI:29035"/>
        <label>1</label>
    </ligand>
</feature>
<feature type="binding site" evidence="1">
    <location>
        <position position="260"/>
    </location>
    <ligand>
        <name>Mn(2+)</name>
        <dbReference type="ChEBI" id="CHEBI:29035"/>
        <label>2</label>
    </ligand>
</feature>
<feature type="binding site" evidence="1">
    <location>
        <position position="262"/>
    </location>
    <ligand>
        <name>Mg(2+)</name>
        <dbReference type="ChEBI" id="CHEBI:18420"/>
        <label>2</label>
    </ligand>
</feature>
<feature type="binding site" evidence="1">
    <location>
        <position position="262"/>
    </location>
    <ligand>
        <name>Mn(2+)</name>
        <dbReference type="ChEBI" id="CHEBI:29035"/>
        <label>2</label>
    </ligand>
</feature>
<comment type="cofactor">
    <cofactor evidence="1">
        <name>Mg(2+)</name>
        <dbReference type="ChEBI" id="CHEBI:18420"/>
    </cofactor>
    <cofactor evidence="1">
        <name>Mn(2+)</name>
        <dbReference type="ChEBI" id="CHEBI:29035"/>
    </cofactor>
    <text evidence="1">Binds 2 magnesium or manganese ions per subunit.</text>
</comment>
<comment type="similarity">
    <text evidence="1">Belongs to the RimK family.</text>
</comment>
<dbReference type="EC" id="6.3.2.-" evidence="1"/>
<dbReference type="EMBL" id="CP000826">
    <property type="protein sequence ID" value="ABV40747.1"/>
    <property type="molecule type" value="Genomic_DNA"/>
</dbReference>
<dbReference type="SMR" id="A8GCA7"/>
<dbReference type="STRING" id="399741.Spro_1643"/>
<dbReference type="KEGG" id="spe:Spro_1643"/>
<dbReference type="eggNOG" id="COG0189">
    <property type="taxonomic scope" value="Bacteria"/>
</dbReference>
<dbReference type="HOGENOM" id="CLU_054353_0_1_6"/>
<dbReference type="OrthoDB" id="3865600at2"/>
<dbReference type="GO" id="GO:0005737">
    <property type="term" value="C:cytoplasm"/>
    <property type="evidence" value="ECO:0007669"/>
    <property type="project" value="TreeGrafter"/>
</dbReference>
<dbReference type="GO" id="GO:0005524">
    <property type="term" value="F:ATP binding"/>
    <property type="evidence" value="ECO:0007669"/>
    <property type="project" value="UniProtKB-UniRule"/>
</dbReference>
<dbReference type="GO" id="GO:0046872">
    <property type="term" value="F:metal ion binding"/>
    <property type="evidence" value="ECO:0007669"/>
    <property type="project" value="UniProtKB-KW"/>
</dbReference>
<dbReference type="GO" id="GO:0018169">
    <property type="term" value="F:ribosomal S6-glutamic acid ligase activity"/>
    <property type="evidence" value="ECO:0007669"/>
    <property type="project" value="TreeGrafter"/>
</dbReference>
<dbReference type="GO" id="GO:0036211">
    <property type="term" value="P:protein modification process"/>
    <property type="evidence" value="ECO:0007669"/>
    <property type="project" value="InterPro"/>
</dbReference>
<dbReference type="GO" id="GO:0009432">
    <property type="term" value="P:SOS response"/>
    <property type="evidence" value="ECO:0007669"/>
    <property type="project" value="TreeGrafter"/>
</dbReference>
<dbReference type="GO" id="GO:0006412">
    <property type="term" value="P:translation"/>
    <property type="evidence" value="ECO:0007669"/>
    <property type="project" value="UniProtKB-KW"/>
</dbReference>
<dbReference type="FunFam" id="3.40.50.20:FF:000004">
    <property type="entry name" value="Probable alpha-L-glutamate ligase"/>
    <property type="match status" value="1"/>
</dbReference>
<dbReference type="FunFam" id="3.30.1490.20:FF:000005">
    <property type="entry name" value="Probable alpha-L-glutamate ligase 1"/>
    <property type="match status" value="1"/>
</dbReference>
<dbReference type="Gene3D" id="3.40.50.20">
    <property type="match status" value="1"/>
</dbReference>
<dbReference type="Gene3D" id="3.30.1490.20">
    <property type="entry name" value="ATP-grasp fold, A domain"/>
    <property type="match status" value="1"/>
</dbReference>
<dbReference type="Gene3D" id="3.30.470.20">
    <property type="entry name" value="ATP-grasp fold, B domain"/>
    <property type="match status" value="1"/>
</dbReference>
<dbReference type="HAMAP" id="MF_01552">
    <property type="entry name" value="RimK"/>
    <property type="match status" value="1"/>
</dbReference>
<dbReference type="InterPro" id="IPR011761">
    <property type="entry name" value="ATP-grasp"/>
</dbReference>
<dbReference type="InterPro" id="IPR013651">
    <property type="entry name" value="ATP-grasp_RimK-type"/>
</dbReference>
<dbReference type="InterPro" id="IPR013815">
    <property type="entry name" value="ATP_grasp_subdomain_1"/>
</dbReference>
<dbReference type="InterPro" id="IPR023533">
    <property type="entry name" value="RimK"/>
</dbReference>
<dbReference type="InterPro" id="IPR041107">
    <property type="entry name" value="Rimk_N"/>
</dbReference>
<dbReference type="InterPro" id="IPR004666">
    <property type="entry name" value="Rp_bS6_RimK/Lys_biosynth_LsyX"/>
</dbReference>
<dbReference type="NCBIfam" id="NF007764">
    <property type="entry name" value="PRK10446.1"/>
    <property type="match status" value="1"/>
</dbReference>
<dbReference type="NCBIfam" id="TIGR00768">
    <property type="entry name" value="rimK_fam"/>
    <property type="match status" value="1"/>
</dbReference>
<dbReference type="PANTHER" id="PTHR21621:SF7">
    <property type="entry name" value="RIBOSOMAL PROTEIN BS6--L-GLUTAMATE LIGASE"/>
    <property type="match status" value="1"/>
</dbReference>
<dbReference type="PANTHER" id="PTHR21621">
    <property type="entry name" value="RIBOSOMAL PROTEIN S6 MODIFICATION PROTEIN"/>
    <property type="match status" value="1"/>
</dbReference>
<dbReference type="Pfam" id="PF08443">
    <property type="entry name" value="RimK"/>
    <property type="match status" value="1"/>
</dbReference>
<dbReference type="Pfam" id="PF18030">
    <property type="entry name" value="Rimk_N"/>
    <property type="match status" value="1"/>
</dbReference>
<dbReference type="SUPFAM" id="SSF56059">
    <property type="entry name" value="Glutathione synthetase ATP-binding domain-like"/>
    <property type="match status" value="1"/>
</dbReference>
<dbReference type="PROSITE" id="PS50975">
    <property type="entry name" value="ATP_GRASP"/>
    <property type="match status" value="1"/>
</dbReference>
<proteinExistence type="inferred from homology"/>
<name>RIMK_SERP5</name>
<organism>
    <name type="scientific">Serratia proteamaculans (strain 568)</name>
    <dbReference type="NCBI Taxonomy" id="399741"/>
    <lineage>
        <taxon>Bacteria</taxon>
        <taxon>Pseudomonadati</taxon>
        <taxon>Pseudomonadota</taxon>
        <taxon>Gammaproteobacteria</taxon>
        <taxon>Enterobacterales</taxon>
        <taxon>Yersiniaceae</taxon>
        <taxon>Serratia</taxon>
    </lineage>
</organism>
<sequence>MKIAILSRDGTLYSCKRLVEAAEQRGHSIEVIDPLSCYMNINPAAPTIHYRGRQLERYDAVIPRIGSAMTFYGTAVLRQFELLGSYPLNESVAITRARDKLRSLQLLARQGIDLPITGFAHSPDDTGDLIELVGGAPLVVKLVEGTQGIGVVLAETRQAAESVIDAFRGLNAHILVQEYIREAQGSDVRCLVVGSKVVAAIERQAKPGEFRSNLHRGGTARKVSITAKERAIAVKAATTLGLDVAGVDILRAARGPLVMEVNASPGLEGVESTTGLDIAGRMIEYIEQRGRPGFRLKSGG</sequence>